<evidence type="ECO:0000256" key="1">
    <source>
        <dbReference type="SAM" id="MobiDB-lite"/>
    </source>
</evidence>
<evidence type="ECO:0000305" key="2"/>
<dbReference type="EMBL" id="U00096">
    <property type="protein sequence ID" value="AAC74238.1"/>
    <property type="molecule type" value="Genomic_DNA"/>
</dbReference>
<dbReference type="EMBL" id="AP009048">
    <property type="protein sequence ID" value="BAA35980.1"/>
    <property type="molecule type" value="Genomic_DNA"/>
</dbReference>
<dbReference type="EMBL" id="X01805">
    <property type="status" value="NOT_ANNOTATED_CDS"/>
    <property type="molecule type" value="Genomic_DNA"/>
</dbReference>
<dbReference type="PIR" id="G64860">
    <property type="entry name" value="G64860"/>
</dbReference>
<dbReference type="RefSeq" id="NP_415672.1">
    <property type="nucleotide sequence ID" value="NC_000913.3"/>
</dbReference>
<dbReference type="RefSeq" id="WP_000554703.1">
    <property type="nucleotide sequence ID" value="NZ_CP064677.1"/>
</dbReference>
<dbReference type="SMR" id="P45581"/>
<dbReference type="BioGRID" id="4262856">
    <property type="interactions" value="14"/>
</dbReference>
<dbReference type="FunCoup" id="P45581">
    <property type="interactions" value="52"/>
</dbReference>
<dbReference type="STRING" id="511145.b1154"/>
<dbReference type="PaxDb" id="511145-b1154"/>
<dbReference type="EnsemblBacteria" id="AAC74238">
    <property type="protein sequence ID" value="AAC74238"/>
    <property type="gene ID" value="b1154"/>
</dbReference>
<dbReference type="GeneID" id="945726"/>
<dbReference type="KEGG" id="ecj:JW1140"/>
<dbReference type="KEGG" id="eco:b1154"/>
<dbReference type="PATRIC" id="fig|511145.12.peg.1195"/>
<dbReference type="EchoBASE" id="EB2715"/>
<dbReference type="eggNOG" id="ENOG5032R6X">
    <property type="taxonomic scope" value="Bacteria"/>
</dbReference>
<dbReference type="HOGENOM" id="CLU_098583_1_0_6"/>
<dbReference type="InParanoid" id="P45581"/>
<dbReference type="BioCyc" id="EcoCyc:EG12877-MONOMER"/>
<dbReference type="PRO" id="PR:P45581"/>
<dbReference type="Proteomes" id="UP000000625">
    <property type="component" value="Chromosome"/>
</dbReference>
<dbReference type="Gene3D" id="2.60.40.3940">
    <property type="match status" value="1"/>
</dbReference>
<dbReference type="InterPro" id="IPR054075">
    <property type="entry name" value="Gp53-like_C"/>
</dbReference>
<dbReference type="Pfam" id="PF21882">
    <property type="entry name" value="Gp53-like_C"/>
    <property type="match status" value="1"/>
</dbReference>
<keyword id="KW-1185">Reference proteome</keyword>
<proteinExistence type="predicted"/>
<protein>
    <recommendedName>
        <fullName evidence="2">Uncharacterized protein StfP</fullName>
    </recommendedName>
    <alternativeName>
        <fullName>Uncharacterized protein StfP from lambdoid prophage e14 region</fullName>
    </alternativeName>
</protein>
<name>STFP_ECOLI</name>
<reference key="1">
    <citation type="journal article" date="1996" name="DNA Res.">
        <title>A 718-kb DNA sequence of the Escherichia coli K-12 genome corresponding to the 12.7-28.0 min region on the linkage map.</title>
        <authorList>
            <person name="Oshima T."/>
            <person name="Aiba H."/>
            <person name="Baba T."/>
            <person name="Fujita K."/>
            <person name="Hayashi K."/>
            <person name="Honjo A."/>
            <person name="Ikemoto K."/>
            <person name="Inada T."/>
            <person name="Itoh T."/>
            <person name="Kajihara M."/>
            <person name="Kanai K."/>
            <person name="Kashimoto K."/>
            <person name="Kimura S."/>
            <person name="Kitagawa M."/>
            <person name="Makino K."/>
            <person name="Masuda S."/>
            <person name="Miki T."/>
            <person name="Mizobuchi K."/>
            <person name="Mori H."/>
            <person name="Motomura K."/>
            <person name="Nakamura Y."/>
            <person name="Nashimoto H."/>
            <person name="Nishio Y."/>
            <person name="Saito N."/>
            <person name="Sampei G."/>
            <person name="Seki Y."/>
            <person name="Tagami H."/>
            <person name="Takemoto K."/>
            <person name="Wada C."/>
            <person name="Yamamoto Y."/>
            <person name="Yano M."/>
            <person name="Horiuchi T."/>
        </authorList>
    </citation>
    <scope>NUCLEOTIDE SEQUENCE [LARGE SCALE GENOMIC DNA]</scope>
    <source>
        <strain>K12 / W3110 / ATCC 27325 / DSM 5911</strain>
    </source>
</reference>
<reference key="2">
    <citation type="journal article" date="1997" name="Science">
        <title>The complete genome sequence of Escherichia coli K-12.</title>
        <authorList>
            <person name="Blattner F.R."/>
            <person name="Plunkett G. III"/>
            <person name="Bloch C.A."/>
            <person name="Perna N.T."/>
            <person name="Burland V."/>
            <person name="Riley M."/>
            <person name="Collado-Vides J."/>
            <person name="Glasner J.D."/>
            <person name="Rode C.K."/>
            <person name="Mayhew G.F."/>
            <person name="Gregor J."/>
            <person name="Davis N.W."/>
            <person name="Kirkpatrick H.A."/>
            <person name="Goeden M.A."/>
            <person name="Rose D.J."/>
            <person name="Mau B."/>
            <person name="Shao Y."/>
        </authorList>
    </citation>
    <scope>NUCLEOTIDE SEQUENCE [LARGE SCALE GENOMIC DNA]</scope>
    <source>
        <strain>K12 / MG1655 / ATCC 47076</strain>
    </source>
</reference>
<reference key="3">
    <citation type="journal article" date="2006" name="Mol. Syst. Biol.">
        <title>Highly accurate genome sequences of Escherichia coli K-12 strains MG1655 and W3110.</title>
        <authorList>
            <person name="Hayashi K."/>
            <person name="Morooka N."/>
            <person name="Yamamoto Y."/>
            <person name="Fujita K."/>
            <person name="Isono K."/>
            <person name="Choi S."/>
            <person name="Ohtsubo E."/>
            <person name="Baba T."/>
            <person name="Wanner B.L."/>
            <person name="Mori H."/>
            <person name="Horiuchi T."/>
        </authorList>
    </citation>
    <scope>NUCLEOTIDE SEQUENCE [LARGE SCALE GENOMIC DNA]</scope>
    <source>
        <strain>K12 / W3110 / ATCC 27325 / DSM 5911</strain>
    </source>
</reference>
<reference key="4">
    <citation type="journal article" date="1985" name="EMBO J.">
        <title>The invertible P-DNA segment in the chromosome of Escherichia coli.</title>
        <authorList>
            <person name="Plasterk R.H.A."/>
            <person name="van de Putte P."/>
        </authorList>
    </citation>
    <scope>NUCLEOTIDE SEQUENCE [GENOMIC DNA] OF 98-209</scope>
    <source>
        <strain>K12</strain>
    </source>
</reference>
<reference key="5">
    <citation type="journal article" date="1995" name="Nucleic Acids Res.">
        <title>Detection of new genes in a bacterial genome using Markov models for three gene classes.</title>
        <authorList>
            <person name="Borodovsky M."/>
            <person name="McIninch J."/>
            <person name="Koonin E.V."/>
            <person name="Rudd K.E."/>
            <person name="Medigue C."/>
            <person name="Danchin A."/>
        </authorList>
    </citation>
    <scope>IDENTIFICATION</scope>
</reference>
<feature type="chain" id="PRO_0000168835" description="Uncharacterized protein StfP">
    <location>
        <begin position="1"/>
        <end position="209"/>
    </location>
</feature>
<feature type="region of interest" description="Disordered" evidence="1">
    <location>
        <begin position="1"/>
        <end position="34"/>
    </location>
</feature>
<feature type="compositionally biased region" description="Basic and acidic residues" evidence="1">
    <location>
        <begin position="1"/>
        <end position="15"/>
    </location>
</feature>
<feature type="compositionally biased region" description="Polar residues" evidence="1">
    <location>
        <begin position="22"/>
        <end position="31"/>
    </location>
</feature>
<comment type="similarity">
    <text evidence="2">To E.coli YfdL and M.jannaschii MJ0347.</text>
</comment>
<sequence>MHRIDTKTAQKDKFGAGKNGFTRGNPQTGTPATDLDDDYFDMLQEELCSVVEASGASLEKGRHDQLLTALRALLLSRKNPFGDIKSDGTVQTALENLGLGEGAKLNAATATLGRTGFIAIPVMIGGIEQSVIIQWGWNAAKASASGGDGNTVVFPVAFNNACVAVVANYDNVSAPINAVATGGYTTTSFLLRCAAQTGSYYYNWIAIGY</sequence>
<gene>
    <name type="primary">stfP</name>
    <name type="synonym">ycfK</name>
    <name type="ordered locus">b1154</name>
    <name type="ordered locus">JW1140</name>
</gene>
<organism>
    <name type="scientific">Escherichia coli (strain K12)</name>
    <dbReference type="NCBI Taxonomy" id="83333"/>
    <lineage>
        <taxon>Bacteria</taxon>
        <taxon>Pseudomonadati</taxon>
        <taxon>Pseudomonadota</taxon>
        <taxon>Gammaproteobacteria</taxon>
        <taxon>Enterobacterales</taxon>
        <taxon>Enterobacteriaceae</taxon>
        <taxon>Escherichia</taxon>
    </lineage>
</organism>
<accession>P45581</accession>
<accession>P75983</accession>